<protein>
    <recommendedName>
        <fullName evidence="11">Dual specificity mitogen-activated protein kinase kinase jkk-1</fullName>
        <shortName evidence="11">MAP kinase kinase jkk-1</shortName>
        <ecNumber evidence="4">2.7.12.2</ecNumber>
    </recommendedName>
    <alternativeName>
        <fullName evidence="10">JNK-1 activator kinase</fullName>
        <shortName evidence="14">JNK kinase</shortName>
    </alternativeName>
</protein>
<evidence type="ECO:0000250" key="1">
    <source>
        <dbReference type="UniProtKB" id="O14733"/>
    </source>
</evidence>
<evidence type="ECO:0000255" key="2">
    <source>
        <dbReference type="PROSITE-ProRule" id="PRU00159"/>
    </source>
</evidence>
<evidence type="ECO:0000256" key="3">
    <source>
        <dbReference type="SAM" id="MobiDB-lite"/>
    </source>
</evidence>
<evidence type="ECO:0000269" key="4">
    <source>
    </source>
</evidence>
<evidence type="ECO:0000269" key="5">
    <source>
    </source>
</evidence>
<evidence type="ECO:0000269" key="6">
    <source>
    </source>
</evidence>
<evidence type="ECO:0000269" key="7">
    <source>
    </source>
</evidence>
<evidence type="ECO:0000269" key="8">
    <source>
    </source>
</evidence>
<evidence type="ECO:0000269" key="9">
    <source>
    </source>
</evidence>
<evidence type="ECO:0000303" key="10">
    <source>
    </source>
</evidence>
<evidence type="ECO:0000305" key="11"/>
<evidence type="ECO:0000312" key="12">
    <source>
        <dbReference type="EMBL" id="BAA82641.1"/>
    </source>
</evidence>
<evidence type="ECO:0000312" key="13">
    <source>
        <dbReference type="Proteomes" id="UP000001940"/>
    </source>
</evidence>
<evidence type="ECO:0000312" key="14">
    <source>
        <dbReference type="WormBase" id="F35C8.3"/>
    </source>
</evidence>
<organism evidence="13">
    <name type="scientific">Caenorhabditis elegans</name>
    <dbReference type="NCBI Taxonomy" id="6239"/>
    <lineage>
        <taxon>Eukaryota</taxon>
        <taxon>Metazoa</taxon>
        <taxon>Ecdysozoa</taxon>
        <taxon>Nematoda</taxon>
        <taxon>Chromadorea</taxon>
        <taxon>Rhabditida</taxon>
        <taxon>Rhabditina</taxon>
        <taxon>Rhabditomorpha</taxon>
        <taxon>Rhabditoidea</taxon>
        <taxon>Rhabditidae</taxon>
        <taxon>Peloderinae</taxon>
        <taxon>Caenorhabditis</taxon>
    </lineage>
</organism>
<comment type="function">
    <text evidence="4 5 6 7 8 9">Dual specificity protein kinase which acts as an essential component of the JNK signal transduction pathway. May phosphorylate jnk-1 (PubMed:10393177, PubMed:15767565, PubMed:17894411). Plays a role in coordinating locomotion via D-type GABAergic motoneurons and in regulating synaptic vesicle transport downstream of adapter protein unc-16 and probably by activating jnk-1 (PubMed:10393177, PubMed:11738026). Positively regulates lifespan (PubMed:15767565). Upon environmental stress such as heat stress regulates daf-16 nuclear translocation probably by activating jnk-1 (PubMed:15767565). Regulates germline cell apoptosis in response to heavy metals such as Cu(2+) and to arsenite (PubMed:18597494, PubMed:19497412).</text>
</comment>
<comment type="catalytic activity">
    <reaction evidence="4">
        <text>L-seryl-[protein] + ATP = O-phospho-L-seryl-[protein] + ADP + H(+)</text>
        <dbReference type="Rhea" id="RHEA:17989"/>
        <dbReference type="Rhea" id="RHEA-COMP:9863"/>
        <dbReference type="Rhea" id="RHEA-COMP:11604"/>
        <dbReference type="ChEBI" id="CHEBI:15378"/>
        <dbReference type="ChEBI" id="CHEBI:29999"/>
        <dbReference type="ChEBI" id="CHEBI:30616"/>
        <dbReference type="ChEBI" id="CHEBI:83421"/>
        <dbReference type="ChEBI" id="CHEBI:456216"/>
        <dbReference type="EC" id="2.7.12.2"/>
    </reaction>
</comment>
<comment type="catalytic activity">
    <reaction evidence="4">
        <text>L-threonyl-[protein] + ATP = O-phospho-L-threonyl-[protein] + ADP + H(+)</text>
        <dbReference type="Rhea" id="RHEA:46608"/>
        <dbReference type="Rhea" id="RHEA-COMP:11060"/>
        <dbReference type="Rhea" id="RHEA-COMP:11605"/>
        <dbReference type="ChEBI" id="CHEBI:15378"/>
        <dbReference type="ChEBI" id="CHEBI:30013"/>
        <dbReference type="ChEBI" id="CHEBI:30616"/>
        <dbReference type="ChEBI" id="CHEBI:61977"/>
        <dbReference type="ChEBI" id="CHEBI:456216"/>
        <dbReference type="EC" id="2.7.12.2"/>
    </reaction>
</comment>
<comment type="catalytic activity">
    <reaction evidence="4">
        <text>L-tyrosyl-[protein] + ATP = O-phospho-L-tyrosyl-[protein] + ADP + H(+)</text>
        <dbReference type="Rhea" id="RHEA:10596"/>
        <dbReference type="Rhea" id="RHEA-COMP:10136"/>
        <dbReference type="Rhea" id="RHEA-COMP:20101"/>
        <dbReference type="ChEBI" id="CHEBI:15378"/>
        <dbReference type="ChEBI" id="CHEBI:30616"/>
        <dbReference type="ChEBI" id="CHEBI:46858"/>
        <dbReference type="ChEBI" id="CHEBI:61978"/>
        <dbReference type="ChEBI" id="CHEBI:456216"/>
        <dbReference type="EC" id="2.7.12.2"/>
    </reaction>
</comment>
<comment type="cofactor">
    <cofactor evidence="1">
        <name>Mg(2+)</name>
        <dbReference type="ChEBI" id="CHEBI:18420"/>
    </cofactor>
</comment>
<comment type="subunit">
    <text evidence="5">Interacts with unc-16.</text>
</comment>
<comment type="subcellular location">
    <subcellularLocation>
        <location evidence="4">Cytoplasm</location>
    </subcellularLocation>
    <subcellularLocation>
        <location evidence="4">Perikaryon</location>
    </subcellularLocation>
    <subcellularLocation>
        <location evidence="4">Cell projection</location>
        <location evidence="4">Axon</location>
    </subcellularLocation>
</comment>
<comment type="tissue specificity">
    <text evidence="4">Expressed in most neurons, including nerve ring, head ganglions, dorsal and ventral nerve cords and tail ganglions.</text>
</comment>
<comment type="similarity">
    <text evidence="11">Belongs to the protein kinase superfamily. STE Ser/Thr protein kinase family. MAP kinase kinase subfamily.</text>
</comment>
<accession>G5EDT6</accession>
<gene>
    <name evidence="14" type="primary">jkk-1</name>
    <name evidence="14" type="ORF">F35C8.3</name>
</gene>
<proteinExistence type="evidence at protein level"/>
<dbReference type="EC" id="2.7.12.2" evidence="4"/>
<dbReference type="EMBL" id="AB024086">
    <property type="protein sequence ID" value="BAA82641.1"/>
    <property type="molecule type" value="mRNA"/>
</dbReference>
<dbReference type="EMBL" id="BX284606">
    <property type="protein sequence ID" value="CCD62782.1"/>
    <property type="molecule type" value="Genomic_DNA"/>
</dbReference>
<dbReference type="PIR" id="T16256">
    <property type="entry name" value="T16256"/>
</dbReference>
<dbReference type="PIR" id="T37324">
    <property type="entry name" value="T37324"/>
</dbReference>
<dbReference type="RefSeq" id="NP_001370369.1">
    <property type="nucleotide sequence ID" value="NM_001383579.1"/>
</dbReference>
<dbReference type="RefSeq" id="NP_508913.1">
    <property type="nucleotide sequence ID" value="NM_076512.4"/>
</dbReference>
<dbReference type="SMR" id="G5EDT6"/>
<dbReference type="FunCoup" id="G5EDT6">
    <property type="interactions" value="4"/>
</dbReference>
<dbReference type="IntAct" id="G5EDT6">
    <property type="interactions" value="6"/>
</dbReference>
<dbReference type="STRING" id="6239.F35C8.3.1"/>
<dbReference type="PaxDb" id="6239-F35C8.3"/>
<dbReference type="EnsemblMetazoa" id="F35C8.3.1">
    <property type="protein sequence ID" value="F35C8.3.1"/>
    <property type="gene ID" value="WBGene00002177"/>
</dbReference>
<dbReference type="EnsemblMetazoa" id="F35C8.3.2">
    <property type="protein sequence ID" value="F35C8.3.2"/>
    <property type="gene ID" value="WBGene00002177"/>
</dbReference>
<dbReference type="GeneID" id="180810"/>
<dbReference type="AGR" id="WB:WBGene00002177"/>
<dbReference type="WormBase" id="F35C8.3">
    <property type="protein sequence ID" value="CE24941"/>
    <property type="gene ID" value="WBGene00002177"/>
    <property type="gene designation" value="jkk-1"/>
</dbReference>
<dbReference type="eggNOG" id="KOG0983">
    <property type="taxonomic scope" value="Eukaryota"/>
</dbReference>
<dbReference type="HOGENOM" id="CLU_000288_63_23_1"/>
<dbReference type="InParanoid" id="G5EDT6"/>
<dbReference type="OMA" id="KICMQIM"/>
<dbReference type="OrthoDB" id="10252354at2759"/>
<dbReference type="PhylomeDB" id="G5EDT6"/>
<dbReference type="Reactome" id="R-CEL-168638">
    <property type="pathway name" value="NOD1/2 Signaling Pathway"/>
</dbReference>
<dbReference type="Reactome" id="R-CEL-2559580">
    <property type="pathway name" value="Oxidative Stress Induced Senescence"/>
</dbReference>
<dbReference type="Reactome" id="R-CEL-450302">
    <property type="pathway name" value="activated TAK1 mediates p38 MAPK activation"/>
</dbReference>
<dbReference type="Reactome" id="R-CEL-6811555">
    <property type="pathway name" value="PI5P Regulates TP53 Acetylation"/>
</dbReference>
<dbReference type="Reactome" id="R-CEL-9833482">
    <property type="pathway name" value="PKR-mediated signaling"/>
</dbReference>
<dbReference type="SignaLink" id="G5EDT6"/>
<dbReference type="PRO" id="PR:G5EDT6"/>
<dbReference type="Proteomes" id="UP000001940">
    <property type="component" value="Chromosome X"/>
</dbReference>
<dbReference type="Bgee" id="WBGene00002177">
    <property type="expression patterns" value="Expressed in pharyngeal muscle cell (C elegans) and 3 other cell types or tissues"/>
</dbReference>
<dbReference type="GO" id="GO:0030424">
    <property type="term" value="C:axon"/>
    <property type="evidence" value="ECO:0000314"/>
    <property type="project" value="WormBase"/>
</dbReference>
<dbReference type="GO" id="GO:0005737">
    <property type="term" value="C:cytoplasm"/>
    <property type="evidence" value="ECO:0000314"/>
    <property type="project" value="WormBase"/>
</dbReference>
<dbReference type="GO" id="GO:0043025">
    <property type="term" value="C:neuronal cell body"/>
    <property type="evidence" value="ECO:0000314"/>
    <property type="project" value="WormBase"/>
</dbReference>
<dbReference type="GO" id="GO:0043204">
    <property type="term" value="C:perikaryon"/>
    <property type="evidence" value="ECO:0007669"/>
    <property type="project" value="UniProtKB-SubCell"/>
</dbReference>
<dbReference type="GO" id="GO:0005524">
    <property type="term" value="F:ATP binding"/>
    <property type="evidence" value="ECO:0007669"/>
    <property type="project" value="UniProtKB-KW"/>
</dbReference>
<dbReference type="GO" id="GO:0004527">
    <property type="term" value="F:exonuclease activity"/>
    <property type="evidence" value="ECO:0000250"/>
    <property type="project" value="WormBase"/>
</dbReference>
<dbReference type="GO" id="GO:0008545">
    <property type="term" value="F:JUN kinase kinase activity"/>
    <property type="evidence" value="ECO:0000314"/>
    <property type="project" value="WormBase"/>
</dbReference>
<dbReference type="GO" id="GO:0004708">
    <property type="term" value="F:MAP kinase kinase activity"/>
    <property type="evidence" value="ECO:0000318"/>
    <property type="project" value="GO_Central"/>
</dbReference>
<dbReference type="GO" id="GO:0046872">
    <property type="term" value="F:metal ion binding"/>
    <property type="evidence" value="ECO:0007669"/>
    <property type="project" value="UniProtKB-KW"/>
</dbReference>
<dbReference type="GO" id="GO:0106310">
    <property type="term" value="F:protein serine kinase activity"/>
    <property type="evidence" value="ECO:0007669"/>
    <property type="project" value="RHEA"/>
</dbReference>
<dbReference type="GO" id="GO:0004674">
    <property type="term" value="F:protein serine/threonine kinase activity"/>
    <property type="evidence" value="ECO:0007669"/>
    <property type="project" value="UniProtKB-KW"/>
</dbReference>
<dbReference type="GO" id="GO:0004713">
    <property type="term" value="F:protein tyrosine kinase activity"/>
    <property type="evidence" value="ECO:0007669"/>
    <property type="project" value="UniProtKB-KW"/>
</dbReference>
<dbReference type="GO" id="GO:0006972">
    <property type="term" value="P:hyperosmotic response"/>
    <property type="evidence" value="ECO:0000316"/>
    <property type="project" value="WormBase"/>
</dbReference>
<dbReference type="GO" id="GO:0040011">
    <property type="term" value="P:locomotion"/>
    <property type="evidence" value="ECO:0000315"/>
    <property type="project" value="WormBase"/>
</dbReference>
<dbReference type="GO" id="GO:0000165">
    <property type="term" value="P:MAPK cascade"/>
    <property type="evidence" value="ECO:0000318"/>
    <property type="project" value="GO_Central"/>
</dbReference>
<dbReference type="CDD" id="cd06618">
    <property type="entry name" value="PKc_MKK7"/>
    <property type="match status" value="1"/>
</dbReference>
<dbReference type="FunFam" id="3.30.200.20:FF:000040">
    <property type="entry name" value="Dual specificity mitogen-activated protein kinase kinase"/>
    <property type="match status" value="1"/>
</dbReference>
<dbReference type="FunFam" id="1.10.510.10:FF:000687">
    <property type="entry name" value="MAP kinase kinase MKK1/SSP32"/>
    <property type="match status" value="1"/>
</dbReference>
<dbReference type="Gene3D" id="3.30.200.20">
    <property type="entry name" value="Phosphorylase Kinase, domain 1"/>
    <property type="match status" value="1"/>
</dbReference>
<dbReference type="Gene3D" id="1.10.510.10">
    <property type="entry name" value="Transferase(Phosphotransferase) domain 1"/>
    <property type="match status" value="1"/>
</dbReference>
<dbReference type="InterPro" id="IPR011009">
    <property type="entry name" value="Kinase-like_dom_sf"/>
</dbReference>
<dbReference type="InterPro" id="IPR000719">
    <property type="entry name" value="Prot_kinase_dom"/>
</dbReference>
<dbReference type="InterPro" id="IPR008271">
    <property type="entry name" value="Ser/Thr_kinase_AS"/>
</dbReference>
<dbReference type="PANTHER" id="PTHR48013">
    <property type="entry name" value="DUAL SPECIFICITY MITOGEN-ACTIVATED PROTEIN KINASE KINASE 5-RELATED"/>
    <property type="match status" value="1"/>
</dbReference>
<dbReference type="PANTHER" id="PTHR48013:SF14">
    <property type="entry name" value="DUAL SPECIFICITY MITOGEN-ACTIVATED PROTEIN KINASE KINASE JKK-1"/>
    <property type="match status" value="1"/>
</dbReference>
<dbReference type="Pfam" id="PF00069">
    <property type="entry name" value="Pkinase"/>
    <property type="match status" value="1"/>
</dbReference>
<dbReference type="SMART" id="SM00220">
    <property type="entry name" value="S_TKc"/>
    <property type="match status" value="1"/>
</dbReference>
<dbReference type="SUPFAM" id="SSF56112">
    <property type="entry name" value="Protein kinase-like (PK-like)"/>
    <property type="match status" value="1"/>
</dbReference>
<dbReference type="PROSITE" id="PS50011">
    <property type="entry name" value="PROTEIN_KINASE_DOM"/>
    <property type="match status" value="1"/>
</dbReference>
<dbReference type="PROSITE" id="PS00108">
    <property type="entry name" value="PROTEIN_KINASE_ST"/>
    <property type="match status" value="1"/>
</dbReference>
<keyword id="KW-0067">ATP-binding</keyword>
<keyword id="KW-0966">Cell projection</keyword>
<keyword id="KW-0963">Cytoplasm</keyword>
<keyword id="KW-0418">Kinase</keyword>
<keyword id="KW-0460">Magnesium</keyword>
<keyword id="KW-0479">Metal-binding</keyword>
<keyword id="KW-0547">Nucleotide-binding</keyword>
<keyword id="KW-1185">Reference proteome</keyword>
<keyword id="KW-0723">Serine/threonine-protein kinase</keyword>
<keyword id="KW-0346">Stress response</keyword>
<keyword id="KW-0808">Transferase</keyword>
<keyword id="KW-0829">Tyrosine-protein kinase</keyword>
<reference evidence="12" key="1">
    <citation type="journal article" date="1999" name="EMBO J.">
        <title>A Caenorhabditis elegans JNK signal transduction pathway regulates coordinated movement via type-D GABAergic motor neurons.</title>
        <authorList>
            <person name="Kawasaki M."/>
            <person name="Hisamoto N."/>
            <person name="Iino Y."/>
            <person name="Yamamoto M."/>
            <person name="Ninomiya-Tsuji J."/>
            <person name="Matsumoto K."/>
        </authorList>
    </citation>
    <scope>NUCLEOTIDE SEQUENCE [MRNA]</scope>
    <scope>FUNCTION</scope>
    <scope>CATALYTIC ACTIVITY</scope>
    <scope>SUBCELLULAR LOCATION</scope>
    <scope>TISSUE SPECIFICITY</scope>
    <scope>MUTAGENESIS OF LYS-149</scope>
</reference>
<reference evidence="13" key="2">
    <citation type="journal article" date="1998" name="Science">
        <title>Genome sequence of the nematode C. elegans: a platform for investigating biology.</title>
        <authorList>
            <consortium name="The C. elegans sequencing consortium"/>
        </authorList>
    </citation>
    <scope>NUCLEOTIDE SEQUENCE [LARGE SCALE GENOMIC DNA]</scope>
    <source>
        <strain evidence="13">Bristol N2</strain>
    </source>
</reference>
<reference evidence="11" key="3">
    <citation type="journal article" date="2001" name="Neuron">
        <title>UNC-16, a JNK-signaling scaffold protein, regulates vesicle transport in C. elegans.</title>
        <authorList>
            <person name="Byrd D.T."/>
            <person name="Kawasaki M."/>
            <person name="Walcoff M."/>
            <person name="Hisamoto N."/>
            <person name="Matsumoto K."/>
            <person name="Jin Y."/>
        </authorList>
    </citation>
    <scope>FUNCTION</scope>
    <scope>INTERACTION WITH UNC-16</scope>
</reference>
<reference evidence="11" key="4">
    <citation type="journal article" date="2005" name="Proc. Natl. Acad. Sci. U.S.A.">
        <title>JNK regulates lifespan in Caenorhabditis elegans by modulating nuclear translocation of forkhead transcription factor/DAF-16.</title>
        <authorList>
            <person name="Oh S.W."/>
            <person name="Mukhopadhyay A."/>
            <person name="Svrzikapa N."/>
            <person name="Jiang F."/>
            <person name="Davis R.J."/>
            <person name="Tissenbaum H.A."/>
        </authorList>
    </citation>
    <scope>FUNCTION</scope>
</reference>
<reference evidence="11" key="5">
    <citation type="journal article" date="2008" name="Chem. Res. Toxicol.">
        <title>Arsenite-induced germline apoptosis through a MAPK-dependent, p53-independent pathway in Caenorhabditis elegans.</title>
        <authorList>
            <person name="Pei B."/>
            <person name="Wang S."/>
            <person name="Guo X."/>
            <person name="Wang J."/>
            <person name="Yang G."/>
            <person name="Hang H."/>
            <person name="Wu L."/>
        </authorList>
    </citation>
    <scope>FUNCTION</scope>
</reference>
<reference evidence="11" key="6">
    <citation type="journal article" date="2008" name="J. Cell. Physiol.">
        <title>The MAP kinase JNK-1 of Caenorhabditis elegans: location, activation, and influences over temperature-dependent insulin-like signaling, stress responses, and fitness.</title>
        <authorList>
            <person name="Wolf M."/>
            <person name="Nunes F."/>
            <person name="Henkel A."/>
            <person name="Heinick A."/>
            <person name="Paul R.J."/>
        </authorList>
    </citation>
    <scope>FUNCTION</scope>
</reference>
<reference evidence="11" key="7">
    <citation type="journal article" date="2009" name="Chem. Biol. Interact.">
        <title>Copper-induced germline apoptosis in Caenorhabditis elegans: the independent roles of DNA damage response signaling and the dependent roles of MAPK cascades.</title>
        <authorList>
            <person name="Wang S."/>
            <person name="Wu L."/>
            <person name="Wang Y."/>
            <person name="Luo X."/>
            <person name="Lu Y."/>
        </authorList>
    </citation>
    <scope>FUNCTION</scope>
</reference>
<name>JKK1_CAEEL</name>
<feature type="chain" id="PRO_0000433602" description="Dual specificity mitogen-activated protein kinase kinase jkk-1" evidence="11">
    <location>
        <begin position="1"/>
        <end position="435"/>
    </location>
</feature>
<feature type="domain" description="Protein kinase" evidence="2">
    <location>
        <begin position="122"/>
        <end position="385"/>
    </location>
</feature>
<feature type="region of interest" description="Disordered" evidence="3">
    <location>
        <begin position="35"/>
        <end position="90"/>
    </location>
</feature>
<feature type="compositionally biased region" description="Basic and acidic residues" evidence="3">
    <location>
        <begin position="35"/>
        <end position="49"/>
    </location>
</feature>
<feature type="compositionally biased region" description="Polar residues" evidence="3">
    <location>
        <begin position="50"/>
        <end position="66"/>
    </location>
</feature>
<feature type="active site" description="Proton acceptor" evidence="2">
    <location>
        <position position="246"/>
    </location>
</feature>
<feature type="binding site" evidence="2">
    <location>
        <begin position="128"/>
        <end position="136"/>
    </location>
    <ligand>
        <name>ATP</name>
        <dbReference type="ChEBI" id="CHEBI:30616"/>
    </ligand>
</feature>
<feature type="binding site" evidence="2">
    <location>
        <position position="149"/>
    </location>
    <ligand>
        <name>ATP</name>
        <dbReference type="ChEBI" id="CHEBI:30616"/>
    </ligand>
</feature>
<feature type="mutagenesis site" description="Loss of kinase activity." evidence="4">
    <original>K</original>
    <variation>R</variation>
    <location>
        <position position="149"/>
    </location>
</feature>
<sequence length="435" mass="50014">MENVCFQQRLRDLETRVRKWKFLKLGLTEVRLRPRDRRSTSVDQKHKECSSTSSSPQHQRPNNIGYLTSPMERKFTPLSMKPSPSRRDTEKDALEYEFLEGYKKSGTLEIDGEKQVVDPNEIHIISLLGSGSCGVVESATVRSKLMAVKTMYKNDNKENLKRILRDVRIMSMCNSPFIVTSYGYFMFDSSVKICMQIMSACCEKLLRRIYHSKLDFFPEFVAGHIVYSAISALDYLKEKHSIIHRDIKPSNILFDDSGNVKLCDFGISGFMTDSMAHSKSAGCPPYMAPERLTIETNSKYDVRSDVWSLGITVYQLVTGLYPFPLNDMEFTTLTIIANLNLPSPSLREETKRSFSPLFIEFLDLCLRKDVRERPEYRQLMKHDFYLDYDPASGSAYKFKAINGKCNQVADWFVDVIRLSKTEDELKSIPNTPCVN</sequence>